<organism>
    <name type="scientific">Dichelobacter nodosus (strain VCS1703A)</name>
    <dbReference type="NCBI Taxonomy" id="246195"/>
    <lineage>
        <taxon>Bacteria</taxon>
        <taxon>Pseudomonadati</taxon>
        <taxon>Pseudomonadota</taxon>
        <taxon>Gammaproteobacteria</taxon>
        <taxon>Cardiobacteriales</taxon>
        <taxon>Cardiobacteriaceae</taxon>
        <taxon>Dichelobacter</taxon>
    </lineage>
</organism>
<comment type="function">
    <text evidence="1">An accessory protein needed during the final step in the assembly of 30S ribosomal subunit, possibly for assembly of the head region. Essential for efficient processing of 16S rRNA. May be needed both before and after RbfA during the maturation of 16S rRNA. It has affinity for free ribosomal 30S subunits but not for 70S ribosomes.</text>
</comment>
<comment type="subunit">
    <text evidence="1">Binds ribosomal protein uS19.</text>
</comment>
<comment type="subcellular location">
    <subcellularLocation>
        <location evidence="1">Cytoplasm</location>
    </subcellularLocation>
</comment>
<comment type="domain">
    <text evidence="1">The PRC barrel domain binds ribosomal protein uS19.</text>
</comment>
<comment type="similarity">
    <text evidence="1">Belongs to the RimM family.</text>
</comment>
<protein>
    <recommendedName>
        <fullName evidence="1">Ribosome maturation factor RimM</fullName>
    </recommendedName>
</protein>
<feature type="chain" id="PRO_1000057115" description="Ribosome maturation factor RimM">
    <location>
        <begin position="1"/>
        <end position="175"/>
    </location>
</feature>
<feature type="domain" description="PRC barrel" evidence="1">
    <location>
        <begin position="97"/>
        <end position="170"/>
    </location>
</feature>
<keyword id="KW-0143">Chaperone</keyword>
<keyword id="KW-0963">Cytoplasm</keyword>
<keyword id="KW-1185">Reference proteome</keyword>
<keyword id="KW-0690">Ribosome biogenesis</keyword>
<keyword id="KW-0698">rRNA processing</keyword>
<evidence type="ECO:0000255" key="1">
    <source>
        <dbReference type="HAMAP-Rule" id="MF_00014"/>
    </source>
</evidence>
<gene>
    <name evidence="1" type="primary">rimM</name>
    <name type="ordered locus">DNO_1008</name>
</gene>
<dbReference type="EMBL" id="CP000513">
    <property type="protein sequence ID" value="ABQ13454.1"/>
    <property type="molecule type" value="Genomic_DNA"/>
</dbReference>
<dbReference type="RefSeq" id="WP_012031320.1">
    <property type="nucleotide sequence ID" value="NC_009446.1"/>
</dbReference>
<dbReference type="SMR" id="A5EXZ2"/>
<dbReference type="STRING" id="246195.DNO_1008"/>
<dbReference type="KEGG" id="dno:DNO_1008"/>
<dbReference type="eggNOG" id="COG0806">
    <property type="taxonomic scope" value="Bacteria"/>
</dbReference>
<dbReference type="HOGENOM" id="CLU_077636_1_0_6"/>
<dbReference type="OrthoDB" id="9783509at2"/>
<dbReference type="Proteomes" id="UP000000248">
    <property type="component" value="Chromosome"/>
</dbReference>
<dbReference type="GO" id="GO:0005737">
    <property type="term" value="C:cytoplasm"/>
    <property type="evidence" value="ECO:0007669"/>
    <property type="project" value="UniProtKB-SubCell"/>
</dbReference>
<dbReference type="GO" id="GO:0005840">
    <property type="term" value="C:ribosome"/>
    <property type="evidence" value="ECO:0007669"/>
    <property type="project" value="InterPro"/>
</dbReference>
<dbReference type="GO" id="GO:0043022">
    <property type="term" value="F:ribosome binding"/>
    <property type="evidence" value="ECO:0007669"/>
    <property type="project" value="InterPro"/>
</dbReference>
<dbReference type="GO" id="GO:0042274">
    <property type="term" value="P:ribosomal small subunit biogenesis"/>
    <property type="evidence" value="ECO:0007669"/>
    <property type="project" value="UniProtKB-UniRule"/>
</dbReference>
<dbReference type="GO" id="GO:0006364">
    <property type="term" value="P:rRNA processing"/>
    <property type="evidence" value="ECO:0007669"/>
    <property type="project" value="UniProtKB-UniRule"/>
</dbReference>
<dbReference type="Gene3D" id="2.30.30.240">
    <property type="entry name" value="PRC-barrel domain"/>
    <property type="match status" value="1"/>
</dbReference>
<dbReference type="Gene3D" id="2.40.30.60">
    <property type="entry name" value="RimM"/>
    <property type="match status" value="1"/>
</dbReference>
<dbReference type="HAMAP" id="MF_00014">
    <property type="entry name" value="Ribosome_mat_RimM"/>
    <property type="match status" value="1"/>
</dbReference>
<dbReference type="InterPro" id="IPR011033">
    <property type="entry name" value="PRC_barrel-like_sf"/>
</dbReference>
<dbReference type="InterPro" id="IPR056792">
    <property type="entry name" value="PRC_RimM"/>
</dbReference>
<dbReference type="InterPro" id="IPR011961">
    <property type="entry name" value="RimM"/>
</dbReference>
<dbReference type="InterPro" id="IPR002676">
    <property type="entry name" value="RimM_N"/>
</dbReference>
<dbReference type="InterPro" id="IPR036976">
    <property type="entry name" value="RimM_N_sf"/>
</dbReference>
<dbReference type="InterPro" id="IPR009000">
    <property type="entry name" value="Transl_B-barrel_sf"/>
</dbReference>
<dbReference type="NCBIfam" id="TIGR02273">
    <property type="entry name" value="16S_RimM"/>
    <property type="match status" value="1"/>
</dbReference>
<dbReference type="PANTHER" id="PTHR33692">
    <property type="entry name" value="RIBOSOME MATURATION FACTOR RIMM"/>
    <property type="match status" value="1"/>
</dbReference>
<dbReference type="PANTHER" id="PTHR33692:SF1">
    <property type="entry name" value="RIBOSOME MATURATION FACTOR RIMM"/>
    <property type="match status" value="1"/>
</dbReference>
<dbReference type="Pfam" id="PF24986">
    <property type="entry name" value="PRC_RimM"/>
    <property type="match status" value="1"/>
</dbReference>
<dbReference type="Pfam" id="PF01782">
    <property type="entry name" value="RimM"/>
    <property type="match status" value="1"/>
</dbReference>
<dbReference type="SUPFAM" id="SSF50346">
    <property type="entry name" value="PRC-barrel domain"/>
    <property type="match status" value="1"/>
</dbReference>
<dbReference type="SUPFAM" id="SSF50447">
    <property type="entry name" value="Translation proteins"/>
    <property type="match status" value="1"/>
</dbReference>
<sequence length="175" mass="20010">MKAQPTLIALGRIIGVHGVRGWVKIHSECRPREAIFNYSVFQATRHHHAQTLKLLDARRSGKSLIALFADICDRDAALQLNGFTLNVTRADLPQLKNGQYYWTDVLGLTVINRSGEHLGKVCDIFETGANDVLVINKDGQEYLIPFISERYIDRIDFENKYLYVDWQMAWTDDAD</sequence>
<reference key="1">
    <citation type="journal article" date="2007" name="Nat. Biotechnol.">
        <title>Genome sequence and identification of candidate vaccine antigens from the animal pathogen Dichelobacter nodosus.</title>
        <authorList>
            <person name="Myers G.S.A."/>
            <person name="Parker D."/>
            <person name="Al-Hasani K."/>
            <person name="Kennan R.M."/>
            <person name="Seemann T."/>
            <person name="Ren Q."/>
            <person name="Badger J.H."/>
            <person name="Selengut J.D."/>
            <person name="Deboy R.T."/>
            <person name="Tettelin H."/>
            <person name="Boyce J.D."/>
            <person name="McCarl V.P."/>
            <person name="Han X."/>
            <person name="Nelson W.C."/>
            <person name="Madupu R."/>
            <person name="Mohamoud Y."/>
            <person name="Holley T."/>
            <person name="Fedorova N."/>
            <person name="Khouri H."/>
            <person name="Bottomley S.P."/>
            <person name="Whittington R.J."/>
            <person name="Adler B."/>
            <person name="Songer J.G."/>
            <person name="Rood J.I."/>
            <person name="Paulsen I.T."/>
        </authorList>
    </citation>
    <scope>NUCLEOTIDE SEQUENCE [LARGE SCALE GENOMIC DNA]</scope>
    <source>
        <strain>VCS1703A</strain>
    </source>
</reference>
<name>RIMM_DICNV</name>
<proteinExistence type="inferred from homology"/>
<accession>A5EXZ2</accession>